<organism>
    <name type="scientific">Arabidopsis thaliana</name>
    <name type="common">Mouse-ear cress</name>
    <dbReference type="NCBI Taxonomy" id="3702"/>
    <lineage>
        <taxon>Eukaryota</taxon>
        <taxon>Viridiplantae</taxon>
        <taxon>Streptophyta</taxon>
        <taxon>Embryophyta</taxon>
        <taxon>Tracheophyta</taxon>
        <taxon>Spermatophyta</taxon>
        <taxon>Magnoliopsida</taxon>
        <taxon>eudicotyledons</taxon>
        <taxon>Gunneridae</taxon>
        <taxon>Pentapetalae</taxon>
        <taxon>rosids</taxon>
        <taxon>malvids</taxon>
        <taxon>Brassicales</taxon>
        <taxon>Brassicaceae</taxon>
        <taxon>Camelineae</taxon>
        <taxon>Arabidopsis</taxon>
    </lineage>
</organism>
<dbReference type="EC" id="2.7.11.1" evidence="2 6"/>
<dbReference type="EMBL" id="AC011808">
    <property type="protein sequence ID" value="AAG10816.1"/>
    <property type="status" value="ALT_SEQ"/>
    <property type="molecule type" value="Genomic_DNA"/>
</dbReference>
<dbReference type="EMBL" id="CP002684">
    <property type="protein sequence ID" value="AEE29481.1"/>
    <property type="molecule type" value="Genomic_DNA"/>
</dbReference>
<dbReference type="EMBL" id="AY059921">
    <property type="protein sequence ID" value="AAL24403.1"/>
    <property type="molecule type" value="mRNA"/>
</dbReference>
<dbReference type="EMBL" id="BT000152">
    <property type="protein sequence ID" value="AAN15471.1"/>
    <property type="molecule type" value="mRNA"/>
</dbReference>
<dbReference type="PIR" id="H86301">
    <property type="entry name" value="H86301"/>
</dbReference>
<dbReference type="RefSeq" id="NP_564003.1">
    <property type="nucleotide sequence ID" value="NM_101527.4"/>
</dbReference>
<dbReference type="SMR" id="Q93YN1"/>
<dbReference type="FunCoup" id="Q93YN1">
    <property type="interactions" value="821"/>
</dbReference>
<dbReference type="STRING" id="3702.Q93YN1"/>
<dbReference type="iPTMnet" id="Q93YN1"/>
<dbReference type="PaxDb" id="3702-AT1G16670.1"/>
<dbReference type="ProteomicsDB" id="224551"/>
<dbReference type="EnsemblPlants" id="AT1G16670.1">
    <property type="protein sequence ID" value="AT1G16670.1"/>
    <property type="gene ID" value="AT1G16670"/>
</dbReference>
<dbReference type="GeneID" id="838236"/>
<dbReference type="Gramene" id="AT1G16670.1">
    <property type="protein sequence ID" value="AT1G16670.1"/>
    <property type="gene ID" value="AT1G16670"/>
</dbReference>
<dbReference type="KEGG" id="ath:AT1G16670"/>
<dbReference type="Araport" id="AT1G16670"/>
<dbReference type="TAIR" id="AT1G16670">
    <property type="gene designation" value="CRPK1"/>
</dbReference>
<dbReference type="eggNOG" id="KOG1187">
    <property type="taxonomic scope" value="Eukaryota"/>
</dbReference>
<dbReference type="HOGENOM" id="CLU_000288_21_4_1"/>
<dbReference type="InParanoid" id="Q93YN1"/>
<dbReference type="OMA" id="MINIVQM"/>
<dbReference type="OrthoDB" id="4062651at2759"/>
<dbReference type="PhylomeDB" id="Q93YN1"/>
<dbReference type="PRO" id="PR:Q93YN1"/>
<dbReference type="Proteomes" id="UP000006548">
    <property type="component" value="Chromosome 1"/>
</dbReference>
<dbReference type="ExpressionAtlas" id="Q93YN1">
    <property type="expression patterns" value="baseline and differential"/>
</dbReference>
<dbReference type="GO" id="GO:0005634">
    <property type="term" value="C:nucleus"/>
    <property type="evidence" value="ECO:0007005"/>
    <property type="project" value="TAIR"/>
</dbReference>
<dbReference type="GO" id="GO:0005886">
    <property type="term" value="C:plasma membrane"/>
    <property type="evidence" value="ECO:0000314"/>
    <property type="project" value="UniProtKB"/>
</dbReference>
<dbReference type="GO" id="GO:0005524">
    <property type="term" value="F:ATP binding"/>
    <property type="evidence" value="ECO:0007669"/>
    <property type="project" value="UniProtKB-KW"/>
</dbReference>
<dbReference type="GO" id="GO:0106310">
    <property type="term" value="F:protein serine kinase activity"/>
    <property type="evidence" value="ECO:0007669"/>
    <property type="project" value="RHEA"/>
</dbReference>
<dbReference type="GO" id="GO:0004674">
    <property type="term" value="F:protein serine/threonine kinase activity"/>
    <property type="evidence" value="ECO:0000314"/>
    <property type="project" value="UniProtKB"/>
</dbReference>
<dbReference type="GO" id="GO:0046777">
    <property type="term" value="P:protein autophosphorylation"/>
    <property type="evidence" value="ECO:0007005"/>
    <property type="project" value="TAIR"/>
</dbReference>
<dbReference type="GO" id="GO:0009409">
    <property type="term" value="P:response to cold"/>
    <property type="evidence" value="ECO:0000315"/>
    <property type="project" value="TAIR"/>
</dbReference>
<dbReference type="GO" id="GO:0050826">
    <property type="term" value="P:response to freezing"/>
    <property type="evidence" value="ECO:0000315"/>
    <property type="project" value="UniProtKB"/>
</dbReference>
<dbReference type="GO" id="GO:0009625">
    <property type="term" value="P:response to insect"/>
    <property type="evidence" value="ECO:0000270"/>
    <property type="project" value="UniProtKB"/>
</dbReference>
<dbReference type="GO" id="GO:0002237">
    <property type="term" value="P:response to molecule of bacterial origin"/>
    <property type="evidence" value="ECO:0000270"/>
    <property type="project" value="UniProtKB"/>
</dbReference>
<dbReference type="CDD" id="cd14066">
    <property type="entry name" value="STKc_IRAK"/>
    <property type="match status" value="1"/>
</dbReference>
<dbReference type="FunFam" id="1.10.510.10:FF:000368">
    <property type="entry name" value="cold-responsive protein kinase 1"/>
    <property type="match status" value="1"/>
</dbReference>
<dbReference type="FunFam" id="3.30.200.20:FF:000225">
    <property type="entry name" value="cold-responsive protein kinase 1"/>
    <property type="match status" value="1"/>
</dbReference>
<dbReference type="Gene3D" id="3.30.200.20">
    <property type="entry name" value="Phosphorylase Kinase, domain 1"/>
    <property type="match status" value="1"/>
</dbReference>
<dbReference type="Gene3D" id="1.10.510.10">
    <property type="entry name" value="Transferase(Phosphotransferase) domain 1"/>
    <property type="match status" value="1"/>
</dbReference>
<dbReference type="InterPro" id="IPR052059">
    <property type="entry name" value="CR_Ser/Thr_kinase"/>
</dbReference>
<dbReference type="InterPro" id="IPR011009">
    <property type="entry name" value="Kinase-like_dom_sf"/>
</dbReference>
<dbReference type="InterPro" id="IPR000719">
    <property type="entry name" value="Prot_kinase_dom"/>
</dbReference>
<dbReference type="InterPro" id="IPR017441">
    <property type="entry name" value="Protein_kinase_ATP_BS"/>
</dbReference>
<dbReference type="InterPro" id="IPR001245">
    <property type="entry name" value="Ser-Thr/Tyr_kinase_cat_dom"/>
</dbReference>
<dbReference type="InterPro" id="IPR008271">
    <property type="entry name" value="Ser/Thr_kinase_AS"/>
</dbReference>
<dbReference type="PANTHER" id="PTHR47973">
    <property type="entry name" value="CYSTEINE-RICH RECEPTOR-LIKE PROTEIN KINASE 3"/>
    <property type="match status" value="1"/>
</dbReference>
<dbReference type="Pfam" id="PF07714">
    <property type="entry name" value="PK_Tyr_Ser-Thr"/>
    <property type="match status" value="1"/>
</dbReference>
<dbReference type="SMART" id="SM00220">
    <property type="entry name" value="S_TKc"/>
    <property type="match status" value="1"/>
</dbReference>
<dbReference type="SUPFAM" id="SSF56112">
    <property type="entry name" value="Protein kinase-like (PK-like)"/>
    <property type="match status" value="1"/>
</dbReference>
<dbReference type="PROSITE" id="PS00107">
    <property type="entry name" value="PROTEIN_KINASE_ATP"/>
    <property type="match status" value="1"/>
</dbReference>
<dbReference type="PROSITE" id="PS50011">
    <property type="entry name" value="PROTEIN_KINASE_DOM"/>
    <property type="match status" value="1"/>
</dbReference>
<dbReference type="PROSITE" id="PS00108">
    <property type="entry name" value="PROTEIN_KINASE_ST"/>
    <property type="match status" value="1"/>
</dbReference>
<gene>
    <name evidence="7" type="primary">CRPK1</name>
    <name evidence="9" type="ordered locus">At1g16670</name>
    <name evidence="10" type="ORF">F19K19.4</name>
</gene>
<feature type="chain" id="PRO_0000440310" description="Cold-responsive protein kinase 1">
    <location>
        <begin position="1"/>
        <end position="390"/>
    </location>
</feature>
<feature type="domain" description="Protein kinase" evidence="2">
    <location>
        <begin position="41"/>
        <end position="320"/>
    </location>
</feature>
<feature type="region of interest" description="Disordered" evidence="4">
    <location>
        <begin position="345"/>
        <end position="390"/>
    </location>
</feature>
<feature type="compositionally biased region" description="Low complexity" evidence="4">
    <location>
        <begin position="354"/>
        <end position="390"/>
    </location>
</feature>
<feature type="active site" description="Proton acceptor" evidence="2 3">
    <location>
        <position position="169"/>
    </location>
</feature>
<feature type="binding site" evidence="2">
    <location>
        <begin position="47"/>
        <end position="55"/>
    </location>
    <ligand>
        <name>ATP</name>
        <dbReference type="ChEBI" id="CHEBI:30616"/>
    </ligand>
</feature>
<feature type="binding site" evidence="2">
    <location>
        <position position="69"/>
    </location>
    <ligand>
        <name>ATP</name>
        <dbReference type="ChEBI" id="CHEBI:30616"/>
    </ligand>
</feature>
<feature type="modified residue" description="Phosphotyrosine" evidence="1">
    <location>
        <position position="114"/>
    </location>
</feature>
<feature type="modified residue" description="Phosphoserine" evidence="1">
    <location>
        <position position="173"/>
    </location>
</feature>
<feature type="modified residue" description="Phosphoserine" evidence="1">
    <location>
        <position position="202"/>
    </location>
</feature>
<feature type="modified residue" description="Phosphothreonine" evidence="1">
    <location>
        <position position="203"/>
    </location>
</feature>
<feature type="modified residue" description="Phosphothreonine" evidence="1">
    <location>
        <position position="208"/>
    </location>
</feature>
<feature type="modified residue" description="Phosphotyrosine" evidence="1">
    <location>
        <position position="216"/>
    </location>
</feature>
<feature type="mutagenesis site" description="Normal subcellular localization at the plasma membrane." evidence="6">
    <original>G</original>
    <variation>A</variation>
    <location>
        <position position="2"/>
    </location>
</feature>
<feature type="mutagenesis site" description="Loss of kinase activity. Impaired autophosphorylation. Enhanced freezing tolerance due to impaired phosphorylation and subsequent translocation of 14-3-3 proteins in cold conditions." evidence="6">
    <original>K</original>
    <variation>E</variation>
    <location>
        <position position="69"/>
    </location>
</feature>
<accession>Q93YN1</accession>
<accession>Q9FX80</accession>
<evidence type="ECO:0000250" key="1">
    <source>
        <dbReference type="UniProtKB" id="O48814"/>
    </source>
</evidence>
<evidence type="ECO:0000255" key="2">
    <source>
        <dbReference type="PROSITE-ProRule" id="PRU00159"/>
    </source>
</evidence>
<evidence type="ECO:0000255" key="3">
    <source>
        <dbReference type="PROSITE-ProRule" id="PRU10027"/>
    </source>
</evidence>
<evidence type="ECO:0000256" key="4">
    <source>
        <dbReference type="SAM" id="MobiDB-lite"/>
    </source>
</evidence>
<evidence type="ECO:0000269" key="5">
    <source>
    </source>
</evidence>
<evidence type="ECO:0000269" key="6">
    <source>
    </source>
</evidence>
<evidence type="ECO:0000303" key="7">
    <source>
    </source>
</evidence>
<evidence type="ECO:0000305" key="8"/>
<evidence type="ECO:0000312" key="9">
    <source>
        <dbReference type="Araport" id="AT1G16670"/>
    </source>
</evidence>
<evidence type="ECO:0000312" key="10">
    <source>
        <dbReference type="EMBL" id="AAG10816.1"/>
    </source>
</evidence>
<protein>
    <recommendedName>
        <fullName evidence="7">Cold-responsive protein kinase 1</fullName>
        <ecNumber evidence="2 6">2.7.11.1</ecNumber>
    </recommendedName>
</protein>
<reference key="1">
    <citation type="journal article" date="2000" name="Nature">
        <title>Sequence and analysis of chromosome 1 of the plant Arabidopsis thaliana.</title>
        <authorList>
            <person name="Theologis A."/>
            <person name="Ecker J.R."/>
            <person name="Palm C.J."/>
            <person name="Federspiel N.A."/>
            <person name="Kaul S."/>
            <person name="White O."/>
            <person name="Alonso J."/>
            <person name="Altafi H."/>
            <person name="Araujo R."/>
            <person name="Bowman C.L."/>
            <person name="Brooks S.Y."/>
            <person name="Buehler E."/>
            <person name="Chan A."/>
            <person name="Chao Q."/>
            <person name="Chen H."/>
            <person name="Cheuk R.F."/>
            <person name="Chin C.W."/>
            <person name="Chung M.K."/>
            <person name="Conn L."/>
            <person name="Conway A.B."/>
            <person name="Conway A.R."/>
            <person name="Creasy T.H."/>
            <person name="Dewar K."/>
            <person name="Dunn P."/>
            <person name="Etgu P."/>
            <person name="Feldblyum T.V."/>
            <person name="Feng J.-D."/>
            <person name="Fong B."/>
            <person name="Fujii C.Y."/>
            <person name="Gill J.E."/>
            <person name="Goldsmith A.D."/>
            <person name="Haas B."/>
            <person name="Hansen N.F."/>
            <person name="Hughes B."/>
            <person name="Huizar L."/>
            <person name="Hunter J.L."/>
            <person name="Jenkins J."/>
            <person name="Johnson-Hopson C."/>
            <person name="Khan S."/>
            <person name="Khaykin E."/>
            <person name="Kim C.J."/>
            <person name="Koo H.L."/>
            <person name="Kremenetskaia I."/>
            <person name="Kurtz D.B."/>
            <person name="Kwan A."/>
            <person name="Lam B."/>
            <person name="Langin-Hooper S."/>
            <person name="Lee A."/>
            <person name="Lee J.M."/>
            <person name="Lenz C.A."/>
            <person name="Li J.H."/>
            <person name="Li Y.-P."/>
            <person name="Lin X."/>
            <person name="Liu S.X."/>
            <person name="Liu Z.A."/>
            <person name="Luros J.S."/>
            <person name="Maiti R."/>
            <person name="Marziali A."/>
            <person name="Militscher J."/>
            <person name="Miranda M."/>
            <person name="Nguyen M."/>
            <person name="Nierman W.C."/>
            <person name="Osborne B.I."/>
            <person name="Pai G."/>
            <person name="Peterson J."/>
            <person name="Pham P.K."/>
            <person name="Rizzo M."/>
            <person name="Rooney T."/>
            <person name="Rowley D."/>
            <person name="Sakano H."/>
            <person name="Salzberg S.L."/>
            <person name="Schwartz J.R."/>
            <person name="Shinn P."/>
            <person name="Southwick A.M."/>
            <person name="Sun H."/>
            <person name="Tallon L.J."/>
            <person name="Tambunga G."/>
            <person name="Toriumi M.J."/>
            <person name="Town C.D."/>
            <person name="Utterback T."/>
            <person name="Van Aken S."/>
            <person name="Vaysberg M."/>
            <person name="Vysotskaia V.S."/>
            <person name="Walker M."/>
            <person name="Wu D."/>
            <person name="Yu G."/>
            <person name="Fraser C.M."/>
            <person name="Venter J.C."/>
            <person name="Davis R.W."/>
        </authorList>
    </citation>
    <scope>NUCLEOTIDE SEQUENCE [LARGE SCALE GENOMIC DNA]</scope>
    <source>
        <strain>cv. Columbia</strain>
    </source>
</reference>
<reference key="2">
    <citation type="journal article" date="2017" name="Plant J.">
        <title>Araport11: a complete reannotation of the Arabidopsis thaliana reference genome.</title>
        <authorList>
            <person name="Cheng C.Y."/>
            <person name="Krishnakumar V."/>
            <person name="Chan A.P."/>
            <person name="Thibaud-Nissen F."/>
            <person name="Schobel S."/>
            <person name="Town C.D."/>
        </authorList>
    </citation>
    <scope>GENOME REANNOTATION</scope>
    <source>
        <strain>cv. Columbia</strain>
    </source>
</reference>
<reference key="3">
    <citation type="journal article" date="2003" name="Science">
        <title>Empirical analysis of transcriptional activity in the Arabidopsis genome.</title>
        <authorList>
            <person name="Yamada K."/>
            <person name="Lim J."/>
            <person name="Dale J.M."/>
            <person name="Chen H."/>
            <person name="Shinn P."/>
            <person name="Palm C.J."/>
            <person name="Southwick A.M."/>
            <person name="Wu H.C."/>
            <person name="Kim C.J."/>
            <person name="Nguyen M."/>
            <person name="Pham P.K."/>
            <person name="Cheuk R.F."/>
            <person name="Karlin-Newmann G."/>
            <person name="Liu S.X."/>
            <person name="Lam B."/>
            <person name="Sakano H."/>
            <person name="Wu T."/>
            <person name="Yu G."/>
            <person name="Miranda M."/>
            <person name="Quach H.L."/>
            <person name="Tripp M."/>
            <person name="Chang C.H."/>
            <person name="Lee J.M."/>
            <person name="Toriumi M.J."/>
            <person name="Chan M.M."/>
            <person name="Tang C.C."/>
            <person name="Onodera C.S."/>
            <person name="Deng J.M."/>
            <person name="Akiyama K."/>
            <person name="Ansari Y."/>
            <person name="Arakawa T."/>
            <person name="Banh J."/>
            <person name="Banno F."/>
            <person name="Bowser L."/>
            <person name="Brooks S.Y."/>
            <person name="Carninci P."/>
            <person name="Chao Q."/>
            <person name="Choy N."/>
            <person name="Enju A."/>
            <person name="Goldsmith A.D."/>
            <person name="Gurjal M."/>
            <person name="Hansen N.F."/>
            <person name="Hayashizaki Y."/>
            <person name="Johnson-Hopson C."/>
            <person name="Hsuan V.W."/>
            <person name="Iida K."/>
            <person name="Karnes M."/>
            <person name="Khan S."/>
            <person name="Koesema E."/>
            <person name="Ishida J."/>
            <person name="Jiang P.X."/>
            <person name="Jones T."/>
            <person name="Kawai J."/>
            <person name="Kamiya A."/>
            <person name="Meyers C."/>
            <person name="Nakajima M."/>
            <person name="Narusaka M."/>
            <person name="Seki M."/>
            <person name="Sakurai T."/>
            <person name="Satou M."/>
            <person name="Tamse R."/>
            <person name="Vaysberg M."/>
            <person name="Wallender E.K."/>
            <person name="Wong C."/>
            <person name="Yamamura Y."/>
            <person name="Yuan S."/>
            <person name="Shinozaki K."/>
            <person name="Davis R.W."/>
            <person name="Theologis A."/>
            <person name="Ecker J.R."/>
        </authorList>
    </citation>
    <scope>NUCLEOTIDE SEQUENCE [LARGE SCALE MRNA]</scope>
    <source>
        <strain>cv. Columbia</strain>
    </source>
</reference>
<reference key="4">
    <citation type="journal article" date="2007" name="Plant Physiol.">
        <title>Oviposition by pierid butterflies triggers defense responses in Arabidopsis.</title>
        <authorList>
            <person name="Little D."/>
            <person name="Gouhier-Darimont C."/>
            <person name="Bruessow F."/>
            <person name="Reymond P."/>
        </authorList>
    </citation>
    <scope>INDUCTION BY P.BRASSICAE OVIPOSITION; FLG22 AND ELF26</scope>
</reference>
<reference key="5">
    <citation type="journal article" date="2017" name="Mol. Cell">
        <title>Plasma membrane CRPK1-mediated phosphorylation of 14-3-3 proteins induces their nuclear import to fine-tune CBF signaling during cold response.</title>
        <authorList>
            <person name="Liu Z."/>
            <person name="Jia Y."/>
            <person name="Ding Y."/>
            <person name="Shi Y."/>
            <person name="Li Z."/>
            <person name="Guo Y."/>
            <person name="Gong Z."/>
            <person name="Yang S."/>
        </authorList>
    </citation>
    <scope>FUNCTION</scope>
    <scope>DISRUPTION PHENOTYPE</scope>
    <scope>MUTAGENESIS OF GLY-2 AND LYS-69</scope>
    <scope>CATALYTIC ACTIVITY</scope>
    <scope>ACTIVITY REGULATION</scope>
    <scope>SUBUNIT</scope>
    <scope>INTERACTION WITH GRF6</scope>
    <scope>SUBCELLULAR LOCATION</scope>
    <scope>PHOSPHORYLATION</scope>
    <source>
        <strain>cv. Columbia</strain>
    </source>
</reference>
<name>CRPK1_ARATH</name>
<keyword id="KW-0067">ATP-binding</keyword>
<keyword id="KW-1003">Cell membrane</keyword>
<keyword id="KW-0418">Kinase</keyword>
<keyword id="KW-0472">Membrane</keyword>
<keyword id="KW-0547">Nucleotide-binding</keyword>
<keyword id="KW-0597">Phosphoprotein</keyword>
<keyword id="KW-1185">Reference proteome</keyword>
<keyword id="KW-0723">Serine/threonine-protein kinase</keyword>
<keyword id="KW-0346">Stress response</keyword>
<keyword id="KW-0808">Transferase</keyword>
<comment type="function">
    <text evidence="6">Negative regulator of freezing tolerance that phosphorylates 14-3-3 proteins (e.g. GRF6) thus triggering their translocation from the cytosol to the nucleus in response to cold stress.</text>
</comment>
<comment type="catalytic activity">
    <reaction evidence="2 6">
        <text>L-seryl-[protein] + ATP = O-phospho-L-seryl-[protein] + ADP + H(+)</text>
        <dbReference type="Rhea" id="RHEA:17989"/>
        <dbReference type="Rhea" id="RHEA-COMP:9863"/>
        <dbReference type="Rhea" id="RHEA-COMP:11604"/>
        <dbReference type="ChEBI" id="CHEBI:15378"/>
        <dbReference type="ChEBI" id="CHEBI:29999"/>
        <dbReference type="ChEBI" id="CHEBI:30616"/>
        <dbReference type="ChEBI" id="CHEBI:83421"/>
        <dbReference type="ChEBI" id="CHEBI:456216"/>
        <dbReference type="EC" id="2.7.11.1"/>
    </reaction>
</comment>
<comment type="catalytic activity">
    <reaction evidence="2 6">
        <text>L-threonyl-[protein] + ATP = O-phospho-L-threonyl-[protein] + ADP + H(+)</text>
        <dbReference type="Rhea" id="RHEA:46608"/>
        <dbReference type="Rhea" id="RHEA-COMP:11060"/>
        <dbReference type="Rhea" id="RHEA-COMP:11605"/>
        <dbReference type="ChEBI" id="CHEBI:15378"/>
        <dbReference type="ChEBI" id="CHEBI:30013"/>
        <dbReference type="ChEBI" id="CHEBI:30616"/>
        <dbReference type="ChEBI" id="CHEBI:61977"/>
        <dbReference type="ChEBI" id="CHEBI:456216"/>
        <dbReference type="EC" id="2.7.11.1"/>
    </reaction>
</comment>
<comment type="activity regulation">
    <text evidence="6">Activated by cold.</text>
</comment>
<comment type="subunit">
    <text evidence="6">Interacts with and phosphorylates 14-3-3 proteins. Binds to GRF6 at the plasma membrane.</text>
</comment>
<comment type="subcellular location">
    <subcellularLocation>
        <location evidence="6">Cell membrane</location>
        <topology evidence="8">Peripheral membrane protein</topology>
        <orientation evidence="8">Cytoplasmic side</orientation>
    </subcellularLocation>
</comment>
<comment type="induction">
    <text evidence="5">Accumulates upon P.brassicae oviposition and in response to bacterial elicitors (e.g. flg22 and elf26).</text>
</comment>
<comment type="PTM">
    <text evidence="6">Autophosphorylated.</text>
</comment>
<comment type="disruption phenotype">
    <text evidence="6">Enhanced freezing tolerance due to impaired phosphorylation and subsequent translocation of 14-3-3 proteins in cold conditions. Altered cold induction of cold-responsive C-repeat-binding factor (CBF) target genes.</text>
</comment>
<comment type="similarity">
    <text evidence="2">Belongs to the protein kinase superfamily. Ser/Thr protein kinase family.</text>
</comment>
<comment type="sequence caution" evidence="8">
    <conflict type="erroneous gene model prediction">
        <sequence resource="EMBL-CDS" id="AAG10816"/>
    </conflict>
</comment>
<proteinExistence type="evidence at protein level"/>
<sequence>MGCSWLSCHRREATEVDGEIAAIDNVKIYKYREIRQATDDFSAENKIGEGGFGSVYKGCLKDGKLAAIKVLSAESRQGVKEFLTEINVISEIQHENLVKLYGCCVEGNHRILVYNFLENNSLDKTLLAGGYTRSGIQFDWSSRANICVGVAKGLAFLHEEVRPHIIHRDIKASNILLDKYLSPKISDFGLARLMPPNMTHVSTRVAGTIGYLAPEYAVRGQLTRKADIYSFGVLLMEIVSGRSNKNTRLPTEYQYLLERAWELYERNELVDLVDSGLNGVFDAEEACRYLKIGLLCTQDSPKLRPSMSTVVRLLTGEKDIDYKKISRPGLISDFMDLKVRGPVATKTEQVNRQNYTNPSSSSNGSSRDHSNAYSSGASSANAGNTFSSTI</sequence>